<organism>
    <name type="scientific">Cellvibrio japonicus (strain Ueda107)</name>
    <name type="common">Pseudomonas fluorescens subsp. cellulosa</name>
    <dbReference type="NCBI Taxonomy" id="498211"/>
    <lineage>
        <taxon>Bacteria</taxon>
        <taxon>Pseudomonadati</taxon>
        <taxon>Pseudomonadota</taxon>
        <taxon>Gammaproteobacteria</taxon>
        <taxon>Cellvibrionales</taxon>
        <taxon>Cellvibrionaceae</taxon>
        <taxon>Cellvibrio</taxon>
    </lineage>
</organism>
<gene>
    <name evidence="1" type="primary">ftsQ</name>
    <name type="ordered locus">CJA_2926</name>
</gene>
<feature type="chain" id="PRO_0000414663" description="Cell division protein FtsQ">
    <location>
        <begin position="1"/>
        <end position="319"/>
    </location>
</feature>
<feature type="topological domain" description="Cytoplasmic" evidence="1">
    <location>
        <begin position="1"/>
        <end position="70"/>
    </location>
</feature>
<feature type="transmembrane region" description="Helical" evidence="1">
    <location>
        <begin position="71"/>
        <end position="87"/>
    </location>
</feature>
<feature type="topological domain" description="Periplasmic" evidence="1">
    <location>
        <begin position="88"/>
        <end position="319"/>
    </location>
</feature>
<feature type="domain" description="POTRA" evidence="2">
    <location>
        <begin position="97"/>
        <end position="166"/>
    </location>
</feature>
<feature type="region of interest" description="Disordered" evidence="3">
    <location>
        <begin position="1"/>
        <end position="53"/>
    </location>
</feature>
<feature type="compositionally biased region" description="Basic and acidic residues" evidence="3">
    <location>
        <begin position="27"/>
        <end position="52"/>
    </location>
</feature>
<name>FTSQ_CELJU</name>
<proteinExistence type="inferred from homology"/>
<accession>B3PCL7</accession>
<reference key="1">
    <citation type="journal article" date="2008" name="J. Bacteriol.">
        <title>Insights into plant cell wall degradation from the genome sequence of the soil bacterium Cellvibrio japonicus.</title>
        <authorList>
            <person name="DeBoy R.T."/>
            <person name="Mongodin E.F."/>
            <person name="Fouts D.E."/>
            <person name="Tailford L.E."/>
            <person name="Khouri H."/>
            <person name="Emerson J.B."/>
            <person name="Mohamoud Y."/>
            <person name="Watkins K."/>
            <person name="Henrissat B."/>
            <person name="Gilbert H.J."/>
            <person name="Nelson K.E."/>
        </authorList>
    </citation>
    <scope>NUCLEOTIDE SEQUENCE [LARGE SCALE GENOMIC DNA]</scope>
    <source>
        <strain>Ueda107</strain>
    </source>
</reference>
<keyword id="KW-0131">Cell cycle</keyword>
<keyword id="KW-0132">Cell division</keyword>
<keyword id="KW-0997">Cell inner membrane</keyword>
<keyword id="KW-1003">Cell membrane</keyword>
<keyword id="KW-0472">Membrane</keyword>
<keyword id="KW-1185">Reference proteome</keyword>
<keyword id="KW-0812">Transmembrane</keyword>
<keyword id="KW-1133">Transmembrane helix</keyword>
<protein>
    <recommendedName>
        <fullName evidence="1">Cell division protein FtsQ</fullName>
    </recommendedName>
</protein>
<comment type="function">
    <text evidence="1">Essential cell division protein. May link together the upstream cell division proteins, which are predominantly cytoplasmic, with the downstream cell division proteins, which are predominantly periplasmic. May control correct divisome assembly.</text>
</comment>
<comment type="subunit">
    <text evidence="1">Part of a complex composed of FtsB, FtsL and FtsQ.</text>
</comment>
<comment type="subcellular location">
    <subcellularLocation>
        <location evidence="1">Cell inner membrane</location>
        <topology evidence="1">Single-pass type II membrane protein</topology>
    </subcellularLocation>
    <text evidence="1">Localizes to the division septum.</text>
</comment>
<comment type="similarity">
    <text evidence="1">Belongs to the FtsQ/DivIB family. FtsQ subfamily.</text>
</comment>
<comment type="sequence caution" evidence="4">
    <conflict type="erroneous initiation">
        <sequence resource="EMBL-CDS" id="ACE85015"/>
    </conflict>
    <text>Extended N-terminus.</text>
</comment>
<evidence type="ECO:0000255" key="1">
    <source>
        <dbReference type="HAMAP-Rule" id="MF_00911"/>
    </source>
</evidence>
<evidence type="ECO:0000255" key="2">
    <source>
        <dbReference type="PROSITE-ProRule" id="PRU01115"/>
    </source>
</evidence>
<evidence type="ECO:0000256" key="3">
    <source>
        <dbReference type="SAM" id="MobiDB-lite"/>
    </source>
</evidence>
<evidence type="ECO:0000305" key="4"/>
<dbReference type="EMBL" id="CP000934">
    <property type="protein sequence ID" value="ACE85015.1"/>
    <property type="status" value="ALT_INIT"/>
    <property type="molecule type" value="Genomic_DNA"/>
</dbReference>
<dbReference type="RefSeq" id="WP_012488510.1">
    <property type="nucleotide sequence ID" value="NC_010995.1"/>
</dbReference>
<dbReference type="SMR" id="B3PCL7"/>
<dbReference type="STRING" id="498211.CJA_2926"/>
<dbReference type="KEGG" id="cja:CJA_2926"/>
<dbReference type="eggNOG" id="COG1589">
    <property type="taxonomic scope" value="Bacteria"/>
</dbReference>
<dbReference type="HOGENOM" id="CLU_064041_1_1_6"/>
<dbReference type="OrthoDB" id="9790370at2"/>
<dbReference type="Proteomes" id="UP000001036">
    <property type="component" value="Chromosome"/>
</dbReference>
<dbReference type="GO" id="GO:0032153">
    <property type="term" value="C:cell division site"/>
    <property type="evidence" value="ECO:0007669"/>
    <property type="project" value="UniProtKB-UniRule"/>
</dbReference>
<dbReference type="GO" id="GO:0005886">
    <property type="term" value="C:plasma membrane"/>
    <property type="evidence" value="ECO:0007669"/>
    <property type="project" value="UniProtKB-SubCell"/>
</dbReference>
<dbReference type="GO" id="GO:0090529">
    <property type="term" value="P:cell septum assembly"/>
    <property type="evidence" value="ECO:0007669"/>
    <property type="project" value="InterPro"/>
</dbReference>
<dbReference type="GO" id="GO:0043093">
    <property type="term" value="P:FtsZ-dependent cytokinesis"/>
    <property type="evidence" value="ECO:0007669"/>
    <property type="project" value="UniProtKB-UniRule"/>
</dbReference>
<dbReference type="Gene3D" id="3.40.50.11690">
    <property type="entry name" value="Cell division protein FtsQ/DivIB"/>
    <property type="match status" value="1"/>
</dbReference>
<dbReference type="Gene3D" id="3.10.20.310">
    <property type="entry name" value="membrane protein fhac"/>
    <property type="match status" value="1"/>
</dbReference>
<dbReference type="HAMAP" id="MF_00911">
    <property type="entry name" value="FtsQ_subfam"/>
    <property type="match status" value="1"/>
</dbReference>
<dbReference type="InterPro" id="IPR005548">
    <property type="entry name" value="Cell_div_FtsQ/DivIB_C"/>
</dbReference>
<dbReference type="InterPro" id="IPR026579">
    <property type="entry name" value="FtsQ"/>
</dbReference>
<dbReference type="InterPro" id="IPR045335">
    <property type="entry name" value="FtsQ_C_sf"/>
</dbReference>
<dbReference type="InterPro" id="IPR034746">
    <property type="entry name" value="POTRA"/>
</dbReference>
<dbReference type="InterPro" id="IPR013685">
    <property type="entry name" value="POTRA_FtsQ_type"/>
</dbReference>
<dbReference type="PANTHER" id="PTHR35851">
    <property type="entry name" value="CELL DIVISION PROTEIN FTSQ"/>
    <property type="match status" value="1"/>
</dbReference>
<dbReference type="PANTHER" id="PTHR35851:SF1">
    <property type="entry name" value="CELL DIVISION PROTEIN FTSQ"/>
    <property type="match status" value="1"/>
</dbReference>
<dbReference type="Pfam" id="PF03799">
    <property type="entry name" value="FtsQ_DivIB_C"/>
    <property type="match status" value="1"/>
</dbReference>
<dbReference type="Pfam" id="PF08478">
    <property type="entry name" value="POTRA_1"/>
    <property type="match status" value="1"/>
</dbReference>
<dbReference type="PROSITE" id="PS51779">
    <property type="entry name" value="POTRA"/>
    <property type="match status" value="1"/>
</dbReference>
<sequence>MDSREDMVPDVLLEAPNPRRRQSADTSTERPTRPARREQGYARVTPRGERMGNHKARVAKPDFFAWFDPRWLWVPLMVCLAVGGYWAYEPLEKLLERPFKSVVVEGEFHFITKARATELISDEIDNNFLQLDLMRLKRTLTDDPWVDSVSLQRRWPDTLVVKIAEQKPIARWGDGFLNQRGQIVRVKEIDRLSGLPWLQGNESDAVEILQQYQDLSQLLRSRGLDVIALKCDNKKSWRLTLKNDVEIAIGRDKVMEKMRRFVTVYDTHLNSVWIDIAAIDVRYSNGLAVRWVEGSESAKKYLRAAAATTNATRNAPTHP</sequence>